<name>RUVA_DEHMC</name>
<protein>
    <recommendedName>
        <fullName evidence="1">Holliday junction branch migration complex subunit RuvA</fullName>
    </recommendedName>
</protein>
<dbReference type="EMBL" id="AJ965256">
    <property type="protein sequence ID" value="CAI82607.1"/>
    <property type="molecule type" value="Genomic_DNA"/>
</dbReference>
<dbReference type="RefSeq" id="WP_011308964.1">
    <property type="nucleotide sequence ID" value="NC_007356.1"/>
</dbReference>
<dbReference type="SMR" id="Q3ZZK6"/>
<dbReference type="KEGG" id="deh:cbdbA398"/>
<dbReference type="HOGENOM" id="CLU_087936_2_1_0"/>
<dbReference type="Proteomes" id="UP000000433">
    <property type="component" value="Chromosome"/>
</dbReference>
<dbReference type="GO" id="GO:0005737">
    <property type="term" value="C:cytoplasm"/>
    <property type="evidence" value="ECO:0007669"/>
    <property type="project" value="UniProtKB-SubCell"/>
</dbReference>
<dbReference type="GO" id="GO:0009379">
    <property type="term" value="C:Holliday junction helicase complex"/>
    <property type="evidence" value="ECO:0007669"/>
    <property type="project" value="InterPro"/>
</dbReference>
<dbReference type="GO" id="GO:0048476">
    <property type="term" value="C:Holliday junction resolvase complex"/>
    <property type="evidence" value="ECO:0007669"/>
    <property type="project" value="UniProtKB-UniRule"/>
</dbReference>
<dbReference type="GO" id="GO:0005524">
    <property type="term" value="F:ATP binding"/>
    <property type="evidence" value="ECO:0007669"/>
    <property type="project" value="InterPro"/>
</dbReference>
<dbReference type="GO" id="GO:0000400">
    <property type="term" value="F:four-way junction DNA binding"/>
    <property type="evidence" value="ECO:0007669"/>
    <property type="project" value="UniProtKB-UniRule"/>
</dbReference>
<dbReference type="GO" id="GO:0009378">
    <property type="term" value="F:four-way junction helicase activity"/>
    <property type="evidence" value="ECO:0007669"/>
    <property type="project" value="InterPro"/>
</dbReference>
<dbReference type="GO" id="GO:0006310">
    <property type="term" value="P:DNA recombination"/>
    <property type="evidence" value="ECO:0007669"/>
    <property type="project" value="UniProtKB-UniRule"/>
</dbReference>
<dbReference type="GO" id="GO:0006281">
    <property type="term" value="P:DNA repair"/>
    <property type="evidence" value="ECO:0007669"/>
    <property type="project" value="UniProtKB-UniRule"/>
</dbReference>
<dbReference type="CDD" id="cd14332">
    <property type="entry name" value="UBA_RuvA_C"/>
    <property type="match status" value="1"/>
</dbReference>
<dbReference type="Gene3D" id="1.10.150.20">
    <property type="entry name" value="5' to 3' exonuclease, C-terminal subdomain"/>
    <property type="match status" value="1"/>
</dbReference>
<dbReference type="Gene3D" id="1.10.8.10">
    <property type="entry name" value="DNA helicase RuvA subunit, C-terminal domain"/>
    <property type="match status" value="1"/>
</dbReference>
<dbReference type="Gene3D" id="2.40.50.140">
    <property type="entry name" value="Nucleic acid-binding proteins"/>
    <property type="match status" value="1"/>
</dbReference>
<dbReference type="HAMAP" id="MF_00031">
    <property type="entry name" value="DNA_HJ_migration_RuvA"/>
    <property type="match status" value="1"/>
</dbReference>
<dbReference type="InterPro" id="IPR013849">
    <property type="entry name" value="DNA_helicase_Holl-junc_RuvA_I"/>
</dbReference>
<dbReference type="InterPro" id="IPR003583">
    <property type="entry name" value="Hlx-hairpin-Hlx_DNA-bd_motif"/>
</dbReference>
<dbReference type="InterPro" id="IPR012340">
    <property type="entry name" value="NA-bd_OB-fold"/>
</dbReference>
<dbReference type="InterPro" id="IPR000085">
    <property type="entry name" value="RuvA"/>
</dbReference>
<dbReference type="InterPro" id="IPR010994">
    <property type="entry name" value="RuvA_2-like"/>
</dbReference>
<dbReference type="InterPro" id="IPR011114">
    <property type="entry name" value="RuvA_C"/>
</dbReference>
<dbReference type="InterPro" id="IPR036267">
    <property type="entry name" value="RuvA_C_sf"/>
</dbReference>
<dbReference type="NCBIfam" id="TIGR00084">
    <property type="entry name" value="ruvA"/>
    <property type="match status" value="1"/>
</dbReference>
<dbReference type="Pfam" id="PF14520">
    <property type="entry name" value="HHH_5"/>
    <property type="match status" value="1"/>
</dbReference>
<dbReference type="Pfam" id="PF07499">
    <property type="entry name" value="RuvA_C"/>
    <property type="match status" value="1"/>
</dbReference>
<dbReference type="Pfam" id="PF01330">
    <property type="entry name" value="RuvA_N"/>
    <property type="match status" value="1"/>
</dbReference>
<dbReference type="SMART" id="SM00278">
    <property type="entry name" value="HhH1"/>
    <property type="match status" value="2"/>
</dbReference>
<dbReference type="SUPFAM" id="SSF46929">
    <property type="entry name" value="DNA helicase RuvA subunit, C-terminal domain"/>
    <property type="match status" value="1"/>
</dbReference>
<dbReference type="SUPFAM" id="SSF50249">
    <property type="entry name" value="Nucleic acid-binding proteins"/>
    <property type="match status" value="1"/>
</dbReference>
<dbReference type="SUPFAM" id="SSF47781">
    <property type="entry name" value="RuvA domain 2-like"/>
    <property type="match status" value="1"/>
</dbReference>
<feature type="chain" id="PRO_0000224862" description="Holliday junction branch migration complex subunit RuvA">
    <location>
        <begin position="1"/>
        <end position="194"/>
    </location>
</feature>
<feature type="region of interest" description="Domain I" evidence="1">
    <location>
        <begin position="1"/>
        <end position="64"/>
    </location>
</feature>
<feature type="region of interest" description="Domain II" evidence="1">
    <location>
        <begin position="65"/>
        <end position="143"/>
    </location>
</feature>
<feature type="region of interest" description="Flexible linker" evidence="1">
    <location>
        <begin position="144"/>
        <end position="149"/>
    </location>
</feature>
<feature type="region of interest" description="Domain III" evidence="1">
    <location>
        <begin position="149"/>
        <end position="194"/>
    </location>
</feature>
<organism>
    <name type="scientific">Dehalococcoides mccartyi (strain CBDB1)</name>
    <dbReference type="NCBI Taxonomy" id="255470"/>
    <lineage>
        <taxon>Bacteria</taxon>
        <taxon>Bacillati</taxon>
        <taxon>Chloroflexota</taxon>
        <taxon>Dehalococcoidia</taxon>
        <taxon>Dehalococcoidales</taxon>
        <taxon>Dehalococcoidaceae</taxon>
        <taxon>Dehalococcoides</taxon>
    </lineage>
</organism>
<comment type="function">
    <text evidence="1">The RuvA-RuvB-RuvC complex processes Holliday junction (HJ) DNA during genetic recombination and DNA repair, while the RuvA-RuvB complex plays an important role in the rescue of blocked DNA replication forks via replication fork reversal (RFR). RuvA specifically binds to HJ cruciform DNA, conferring on it an open structure. The RuvB hexamer acts as an ATP-dependent pump, pulling dsDNA into and through the RuvAB complex. HJ branch migration allows RuvC to scan DNA until it finds its consensus sequence, where it cleaves and resolves the cruciform DNA.</text>
</comment>
<comment type="subunit">
    <text evidence="1">Homotetramer. Forms an RuvA(8)-RuvB(12)-Holliday junction (HJ) complex. HJ DNA is sandwiched between 2 RuvA tetramers; dsDNA enters through RuvA and exits via RuvB. An RuvB hexamer assembles on each DNA strand where it exits the tetramer. Each RuvB hexamer is contacted by two RuvA subunits (via domain III) on 2 adjacent RuvB subunits; this complex drives branch migration. In the full resolvosome a probable DNA-RuvA(4)-RuvB(12)-RuvC(2) complex forms which resolves the HJ.</text>
</comment>
<comment type="subcellular location">
    <subcellularLocation>
        <location evidence="1">Cytoplasm</location>
    </subcellularLocation>
</comment>
<comment type="domain">
    <text evidence="1">Has three domains with a flexible linker between the domains II and III and assumes an 'L' shape. Domain III is highly mobile and contacts RuvB.</text>
</comment>
<comment type="similarity">
    <text evidence="1">Belongs to the RuvA family.</text>
</comment>
<sequence>MISSLNGILEASGKDWAVINVSGVGFRCYMPATSPALIGGLGQRVRVFTHLHVREDALSLFGFATTEELSLFETLIDVSGIGPKLGLAMLSVMNAEALASAIISGNAELLSTIPGIGKKTSSRIILELKDKIAKNWEAGVLSQVTEANSDILATLTALGYSSSEAAKAISSLGDNGDLPLEERIKLALNYFNNK</sequence>
<evidence type="ECO:0000255" key="1">
    <source>
        <dbReference type="HAMAP-Rule" id="MF_00031"/>
    </source>
</evidence>
<proteinExistence type="inferred from homology"/>
<gene>
    <name evidence="1" type="primary">ruvA</name>
    <name type="ordered locus">cbdbA398</name>
</gene>
<accession>Q3ZZK6</accession>
<reference key="1">
    <citation type="journal article" date="2005" name="Nat. Biotechnol.">
        <title>Genome sequence of the chlorinated compound-respiring bacterium Dehalococcoides species strain CBDB1.</title>
        <authorList>
            <person name="Kube M."/>
            <person name="Beck A."/>
            <person name="Zinder S.H."/>
            <person name="Kuhl H."/>
            <person name="Reinhardt R."/>
            <person name="Adrian L."/>
        </authorList>
    </citation>
    <scope>NUCLEOTIDE SEQUENCE [LARGE SCALE GENOMIC DNA]</scope>
    <source>
        <strain>CBDB1</strain>
    </source>
</reference>
<keyword id="KW-0963">Cytoplasm</keyword>
<keyword id="KW-0227">DNA damage</keyword>
<keyword id="KW-0233">DNA recombination</keyword>
<keyword id="KW-0234">DNA repair</keyword>
<keyword id="KW-0238">DNA-binding</keyword>